<dbReference type="EMBL" id="CP000675">
    <property type="protein sequence ID" value="ABQ55859.1"/>
    <property type="molecule type" value="Genomic_DNA"/>
</dbReference>
<dbReference type="RefSeq" id="WP_011947462.1">
    <property type="nucleotide sequence ID" value="NZ_JAPMSS010000007.1"/>
</dbReference>
<dbReference type="SMR" id="A5IEQ9"/>
<dbReference type="KEGG" id="lpc:LPC_1928"/>
<dbReference type="HOGENOM" id="CLU_095787_0_0_6"/>
<dbReference type="GO" id="GO:0005886">
    <property type="term" value="C:plasma membrane"/>
    <property type="evidence" value="ECO:0007669"/>
    <property type="project" value="UniProtKB-SubCell"/>
</dbReference>
<dbReference type="GO" id="GO:0008381">
    <property type="term" value="F:mechanosensitive monoatomic ion channel activity"/>
    <property type="evidence" value="ECO:0007669"/>
    <property type="project" value="UniProtKB-UniRule"/>
</dbReference>
<dbReference type="Gene3D" id="1.10.1200.120">
    <property type="entry name" value="Large-conductance mechanosensitive channel, MscL, domain 1"/>
    <property type="match status" value="1"/>
</dbReference>
<dbReference type="HAMAP" id="MF_00115">
    <property type="entry name" value="MscL"/>
    <property type="match status" value="1"/>
</dbReference>
<dbReference type="InterPro" id="IPR019823">
    <property type="entry name" value="Mechanosensitive_channel_CS"/>
</dbReference>
<dbReference type="InterPro" id="IPR001185">
    <property type="entry name" value="MS_channel"/>
</dbReference>
<dbReference type="InterPro" id="IPR037673">
    <property type="entry name" value="MSC/AndL"/>
</dbReference>
<dbReference type="InterPro" id="IPR036019">
    <property type="entry name" value="MscL_channel"/>
</dbReference>
<dbReference type="NCBIfam" id="TIGR00220">
    <property type="entry name" value="mscL"/>
    <property type="match status" value="1"/>
</dbReference>
<dbReference type="NCBIfam" id="NF001843">
    <property type="entry name" value="PRK00567.1-4"/>
    <property type="match status" value="1"/>
</dbReference>
<dbReference type="PANTHER" id="PTHR30266:SF2">
    <property type="entry name" value="LARGE-CONDUCTANCE MECHANOSENSITIVE CHANNEL"/>
    <property type="match status" value="1"/>
</dbReference>
<dbReference type="PANTHER" id="PTHR30266">
    <property type="entry name" value="MECHANOSENSITIVE CHANNEL MSCL"/>
    <property type="match status" value="1"/>
</dbReference>
<dbReference type="Pfam" id="PF01741">
    <property type="entry name" value="MscL"/>
    <property type="match status" value="1"/>
</dbReference>
<dbReference type="PRINTS" id="PR01264">
    <property type="entry name" value="MECHCHANNEL"/>
</dbReference>
<dbReference type="SUPFAM" id="SSF81330">
    <property type="entry name" value="Gated mechanosensitive channel"/>
    <property type="match status" value="1"/>
</dbReference>
<dbReference type="PROSITE" id="PS01327">
    <property type="entry name" value="MSCL"/>
    <property type="match status" value="1"/>
</dbReference>
<protein>
    <recommendedName>
        <fullName evidence="1">Large-conductance mechanosensitive channel</fullName>
    </recommendedName>
</protein>
<organism>
    <name type="scientific">Legionella pneumophila (strain Corby)</name>
    <dbReference type="NCBI Taxonomy" id="400673"/>
    <lineage>
        <taxon>Bacteria</taxon>
        <taxon>Pseudomonadati</taxon>
        <taxon>Pseudomonadota</taxon>
        <taxon>Gammaproteobacteria</taxon>
        <taxon>Legionellales</taxon>
        <taxon>Legionellaceae</taxon>
        <taxon>Legionella</taxon>
    </lineage>
</organism>
<evidence type="ECO:0000255" key="1">
    <source>
        <dbReference type="HAMAP-Rule" id="MF_00115"/>
    </source>
</evidence>
<comment type="function">
    <text evidence="1">Channel that opens in response to stretch forces in the membrane lipid bilayer. May participate in the regulation of osmotic pressure changes within the cell.</text>
</comment>
<comment type="subunit">
    <text evidence="1">Homopentamer.</text>
</comment>
<comment type="subcellular location">
    <subcellularLocation>
        <location evidence="1">Cell inner membrane</location>
        <topology evidence="1">Multi-pass membrane protein</topology>
    </subcellularLocation>
</comment>
<comment type="similarity">
    <text evidence="1">Belongs to the MscL family.</text>
</comment>
<reference key="1">
    <citation type="submission" date="2006-11" db="EMBL/GenBank/DDBJ databases">
        <title>Identification and characterization of a new conjugation/ type IVA secretion system (trb/tra) of L. pneumophila Corby localized on a mobile genomic island.</title>
        <authorList>
            <person name="Gloeckner G."/>
            <person name="Albert-Weissenberger C."/>
            <person name="Weinmann E."/>
            <person name="Jacobi S."/>
            <person name="Schunder E."/>
            <person name="Steinert M."/>
            <person name="Buchrieser C."/>
            <person name="Hacker J."/>
            <person name="Heuner K."/>
        </authorList>
    </citation>
    <scope>NUCLEOTIDE SEQUENCE [LARGE SCALE GENOMIC DNA]</scope>
    <source>
        <strain>Corby</strain>
    </source>
</reference>
<gene>
    <name evidence="1" type="primary">mscL</name>
    <name type="ordered locus">LPC_1928</name>
</gene>
<name>MSCL_LEGPC</name>
<sequence length="127" mass="13889">MSLLKEFKEFAMRGNVMDLAVAVVMGVAFNKIVTALVDGIIMPCVGLLLGGVNIAGLSFTVGDAQIKWGNFLQNVIDFIIVAFAIFVLIKLINLLQRKKANEPEPVTSEIQLLTEIRDLLARNSSKI</sequence>
<keyword id="KW-0997">Cell inner membrane</keyword>
<keyword id="KW-1003">Cell membrane</keyword>
<keyword id="KW-0407">Ion channel</keyword>
<keyword id="KW-0406">Ion transport</keyword>
<keyword id="KW-0472">Membrane</keyword>
<keyword id="KW-0812">Transmembrane</keyword>
<keyword id="KW-1133">Transmembrane helix</keyword>
<keyword id="KW-0813">Transport</keyword>
<proteinExistence type="inferred from homology"/>
<accession>A5IEQ9</accession>
<feature type="chain" id="PRO_1000015394" description="Large-conductance mechanosensitive channel">
    <location>
        <begin position="1"/>
        <end position="127"/>
    </location>
</feature>
<feature type="transmembrane region" description="Helical" evidence="1">
    <location>
        <begin position="9"/>
        <end position="29"/>
    </location>
</feature>
<feature type="transmembrane region" description="Helical" evidence="1">
    <location>
        <begin position="32"/>
        <end position="52"/>
    </location>
</feature>
<feature type="transmembrane region" description="Helical" evidence="1">
    <location>
        <begin position="75"/>
        <end position="95"/>
    </location>
</feature>